<dbReference type="EC" id="1.2.1.41" evidence="1"/>
<dbReference type="EMBL" id="AE017285">
    <property type="protein sequence ID" value="AAS96429.1"/>
    <property type="molecule type" value="Genomic_DNA"/>
</dbReference>
<dbReference type="RefSeq" id="WP_010939239.1">
    <property type="nucleotide sequence ID" value="NC_002937.3"/>
</dbReference>
<dbReference type="RefSeq" id="YP_011170.1">
    <property type="nucleotide sequence ID" value="NC_002937.3"/>
</dbReference>
<dbReference type="SMR" id="Q72AN9"/>
<dbReference type="STRING" id="882.DVU_1953"/>
<dbReference type="PaxDb" id="882-DVU_1953"/>
<dbReference type="EnsemblBacteria" id="AAS96429">
    <property type="protein sequence ID" value="AAS96429"/>
    <property type="gene ID" value="DVU_1953"/>
</dbReference>
<dbReference type="KEGG" id="dvu:DVU_1953"/>
<dbReference type="PATRIC" id="fig|882.5.peg.1795"/>
<dbReference type="eggNOG" id="COG0014">
    <property type="taxonomic scope" value="Bacteria"/>
</dbReference>
<dbReference type="HOGENOM" id="CLU_030231_0_0_7"/>
<dbReference type="OrthoDB" id="9809970at2"/>
<dbReference type="PhylomeDB" id="Q72AN9"/>
<dbReference type="UniPathway" id="UPA00098">
    <property type="reaction ID" value="UER00360"/>
</dbReference>
<dbReference type="Proteomes" id="UP000002194">
    <property type="component" value="Chromosome"/>
</dbReference>
<dbReference type="GO" id="GO:0005737">
    <property type="term" value="C:cytoplasm"/>
    <property type="evidence" value="ECO:0007669"/>
    <property type="project" value="UniProtKB-SubCell"/>
</dbReference>
<dbReference type="GO" id="GO:0004350">
    <property type="term" value="F:glutamate-5-semialdehyde dehydrogenase activity"/>
    <property type="evidence" value="ECO:0007669"/>
    <property type="project" value="UniProtKB-UniRule"/>
</dbReference>
<dbReference type="GO" id="GO:0050661">
    <property type="term" value="F:NADP binding"/>
    <property type="evidence" value="ECO:0007669"/>
    <property type="project" value="InterPro"/>
</dbReference>
<dbReference type="GO" id="GO:0055129">
    <property type="term" value="P:L-proline biosynthetic process"/>
    <property type="evidence" value="ECO:0007669"/>
    <property type="project" value="UniProtKB-UniRule"/>
</dbReference>
<dbReference type="CDD" id="cd07079">
    <property type="entry name" value="ALDH_F18-19_ProA-GPR"/>
    <property type="match status" value="1"/>
</dbReference>
<dbReference type="FunFam" id="3.40.309.10:FF:000006">
    <property type="entry name" value="Gamma-glutamyl phosphate reductase"/>
    <property type="match status" value="1"/>
</dbReference>
<dbReference type="Gene3D" id="3.40.605.10">
    <property type="entry name" value="Aldehyde Dehydrogenase, Chain A, domain 1"/>
    <property type="match status" value="1"/>
</dbReference>
<dbReference type="Gene3D" id="3.40.309.10">
    <property type="entry name" value="Aldehyde Dehydrogenase, Chain A, domain 2"/>
    <property type="match status" value="1"/>
</dbReference>
<dbReference type="HAMAP" id="MF_00412">
    <property type="entry name" value="ProA"/>
    <property type="match status" value="1"/>
</dbReference>
<dbReference type="InterPro" id="IPR016161">
    <property type="entry name" value="Ald_DH/histidinol_DH"/>
</dbReference>
<dbReference type="InterPro" id="IPR016163">
    <property type="entry name" value="Ald_DH_C"/>
</dbReference>
<dbReference type="InterPro" id="IPR016162">
    <property type="entry name" value="Ald_DH_N"/>
</dbReference>
<dbReference type="InterPro" id="IPR015590">
    <property type="entry name" value="Aldehyde_DH_dom"/>
</dbReference>
<dbReference type="InterPro" id="IPR020593">
    <property type="entry name" value="G-glutamylP_reductase_CS"/>
</dbReference>
<dbReference type="InterPro" id="IPR012134">
    <property type="entry name" value="Glu-5-SA_DH"/>
</dbReference>
<dbReference type="InterPro" id="IPR000965">
    <property type="entry name" value="GPR_dom"/>
</dbReference>
<dbReference type="NCBIfam" id="NF001221">
    <property type="entry name" value="PRK00197.1"/>
    <property type="match status" value="1"/>
</dbReference>
<dbReference type="NCBIfam" id="TIGR00407">
    <property type="entry name" value="proA"/>
    <property type="match status" value="1"/>
</dbReference>
<dbReference type="PANTHER" id="PTHR11063:SF8">
    <property type="entry name" value="DELTA-1-PYRROLINE-5-CARBOXYLATE SYNTHASE"/>
    <property type="match status" value="1"/>
</dbReference>
<dbReference type="PANTHER" id="PTHR11063">
    <property type="entry name" value="GLUTAMATE SEMIALDEHYDE DEHYDROGENASE"/>
    <property type="match status" value="1"/>
</dbReference>
<dbReference type="Pfam" id="PF00171">
    <property type="entry name" value="Aldedh"/>
    <property type="match status" value="1"/>
</dbReference>
<dbReference type="PIRSF" id="PIRSF000151">
    <property type="entry name" value="GPR"/>
    <property type="match status" value="1"/>
</dbReference>
<dbReference type="SUPFAM" id="SSF53720">
    <property type="entry name" value="ALDH-like"/>
    <property type="match status" value="1"/>
</dbReference>
<dbReference type="PROSITE" id="PS01223">
    <property type="entry name" value="PROA"/>
    <property type="match status" value="1"/>
</dbReference>
<name>PROA_NITV2</name>
<keyword id="KW-0028">Amino-acid biosynthesis</keyword>
<keyword id="KW-0963">Cytoplasm</keyword>
<keyword id="KW-0521">NADP</keyword>
<keyword id="KW-0560">Oxidoreductase</keyword>
<keyword id="KW-0641">Proline biosynthesis</keyword>
<keyword id="KW-1185">Reference proteome</keyword>
<gene>
    <name evidence="1" type="primary">proA</name>
    <name type="ordered locus">DVU_1953</name>
</gene>
<evidence type="ECO:0000255" key="1">
    <source>
        <dbReference type="HAMAP-Rule" id="MF_00412"/>
    </source>
</evidence>
<proteinExistence type="inferred from homology"/>
<sequence length="419" mass="44316">MNIASQIEDMGRRARAAGRRLAAASPAAKAGALDHLATLLEQRQDAILAANAADLAAAAEAGMDAPRMDRLRLTPATIAEMAAACRHVAALPDPVGAIETQWQRPNGLLVGKMRIPLGVIAMIYESRPNVTIDSAILCLKAGNAVILRGGSEAIHSNLALAALITEALSSVGLPAEAVQVVSTTDRAVIAELCKLEEHIDVIIPRGGETLIRAVVDMARMPVLKHYKGVCHAYIDSGADLAQAVEIIHNAKVQRPGVCNALEGLLVHRDEAAAFLPAIAERLGNDGVEFRACPASLPLLGDSAIPMKDEDNGQEFHDLILLVRIVDDMDEALAHIAAYGSNHTEIICTRDHGNAMRFLREADASMVAVNASSRFNDGGQLGLGAEIGISTSKLHSYGPMGVQELTTTKFVVFGAGQIRQ</sequence>
<feature type="chain" id="PRO_0000189722" description="Gamma-glutamyl phosphate reductase">
    <location>
        <begin position="1"/>
        <end position="419"/>
    </location>
</feature>
<reference key="1">
    <citation type="journal article" date="2004" name="Nat. Biotechnol.">
        <title>The genome sequence of the anaerobic, sulfate-reducing bacterium Desulfovibrio vulgaris Hildenborough.</title>
        <authorList>
            <person name="Heidelberg J.F."/>
            <person name="Seshadri R."/>
            <person name="Haveman S.A."/>
            <person name="Hemme C.L."/>
            <person name="Paulsen I.T."/>
            <person name="Kolonay J.F."/>
            <person name="Eisen J.A."/>
            <person name="Ward N.L."/>
            <person name="Methe B.A."/>
            <person name="Brinkac L.M."/>
            <person name="Daugherty S.C."/>
            <person name="DeBoy R.T."/>
            <person name="Dodson R.J."/>
            <person name="Durkin A.S."/>
            <person name="Madupu R."/>
            <person name="Nelson W.C."/>
            <person name="Sullivan S.A."/>
            <person name="Fouts D.E."/>
            <person name="Haft D.H."/>
            <person name="Selengut J."/>
            <person name="Peterson J.D."/>
            <person name="Davidsen T.M."/>
            <person name="Zafar N."/>
            <person name="Zhou L."/>
            <person name="Radune D."/>
            <person name="Dimitrov G."/>
            <person name="Hance M."/>
            <person name="Tran K."/>
            <person name="Khouri H.M."/>
            <person name="Gill J."/>
            <person name="Utterback T.R."/>
            <person name="Feldblyum T.V."/>
            <person name="Wall J.D."/>
            <person name="Voordouw G."/>
            <person name="Fraser C.M."/>
        </authorList>
    </citation>
    <scope>NUCLEOTIDE SEQUENCE [LARGE SCALE GENOMIC DNA]</scope>
    <source>
        <strain>ATCC 29579 / DSM 644 / CCUG 34227 / NCIMB 8303 / VKM B-1760 / Hildenborough</strain>
    </source>
</reference>
<organism>
    <name type="scientific">Nitratidesulfovibrio vulgaris (strain ATCC 29579 / DSM 644 / CCUG 34227 / NCIMB 8303 / VKM B-1760 / Hildenborough)</name>
    <name type="common">Desulfovibrio vulgaris</name>
    <dbReference type="NCBI Taxonomy" id="882"/>
    <lineage>
        <taxon>Bacteria</taxon>
        <taxon>Pseudomonadati</taxon>
        <taxon>Thermodesulfobacteriota</taxon>
        <taxon>Desulfovibrionia</taxon>
        <taxon>Desulfovibrionales</taxon>
        <taxon>Desulfovibrionaceae</taxon>
        <taxon>Nitratidesulfovibrio</taxon>
    </lineage>
</organism>
<comment type="function">
    <text evidence="1">Catalyzes the NADPH-dependent reduction of L-glutamate 5-phosphate into L-glutamate 5-semialdehyde and phosphate. The product spontaneously undergoes cyclization to form 1-pyrroline-5-carboxylate.</text>
</comment>
<comment type="catalytic activity">
    <reaction evidence="1">
        <text>L-glutamate 5-semialdehyde + phosphate + NADP(+) = L-glutamyl 5-phosphate + NADPH + H(+)</text>
        <dbReference type="Rhea" id="RHEA:19541"/>
        <dbReference type="ChEBI" id="CHEBI:15378"/>
        <dbReference type="ChEBI" id="CHEBI:43474"/>
        <dbReference type="ChEBI" id="CHEBI:57783"/>
        <dbReference type="ChEBI" id="CHEBI:58066"/>
        <dbReference type="ChEBI" id="CHEBI:58274"/>
        <dbReference type="ChEBI" id="CHEBI:58349"/>
        <dbReference type="EC" id="1.2.1.41"/>
    </reaction>
</comment>
<comment type="pathway">
    <text evidence="1">Amino-acid biosynthesis; L-proline biosynthesis; L-glutamate 5-semialdehyde from L-glutamate: step 2/2.</text>
</comment>
<comment type="subcellular location">
    <subcellularLocation>
        <location evidence="1">Cytoplasm</location>
    </subcellularLocation>
</comment>
<comment type="similarity">
    <text evidence="1">Belongs to the gamma-glutamyl phosphate reductase family.</text>
</comment>
<protein>
    <recommendedName>
        <fullName evidence="1">Gamma-glutamyl phosphate reductase</fullName>
        <shortName evidence="1">GPR</shortName>
        <ecNumber evidence="1">1.2.1.41</ecNumber>
    </recommendedName>
    <alternativeName>
        <fullName evidence="1">Glutamate-5-semialdehyde dehydrogenase</fullName>
    </alternativeName>
    <alternativeName>
        <fullName evidence="1">Glutamyl-gamma-semialdehyde dehydrogenase</fullName>
        <shortName evidence="1">GSA dehydrogenase</shortName>
    </alternativeName>
</protein>
<accession>Q72AN9</accession>